<organism>
    <name type="scientific">Bos taurus</name>
    <name type="common">Bovine</name>
    <dbReference type="NCBI Taxonomy" id="9913"/>
    <lineage>
        <taxon>Eukaryota</taxon>
        <taxon>Metazoa</taxon>
        <taxon>Chordata</taxon>
        <taxon>Craniata</taxon>
        <taxon>Vertebrata</taxon>
        <taxon>Euteleostomi</taxon>
        <taxon>Mammalia</taxon>
        <taxon>Eutheria</taxon>
        <taxon>Laurasiatheria</taxon>
        <taxon>Artiodactyla</taxon>
        <taxon>Ruminantia</taxon>
        <taxon>Pecora</taxon>
        <taxon>Bovidae</taxon>
        <taxon>Bovinae</taxon>
        <taxon>Bos</taxon>
    </lineage>
</organism>
<comment type="function">
    <text evidence="2">Component of the signaling pathway of IL-1 and Toll-like receptors (By similarity). Inhibits cell activation by microbial products (By similarity). Recruits IRAK1 to the IL-1 receptor complex (By similarity). Inhibits IRAK1 phosphorylation and kinase activity. Connects the ubiquitin pathway to autophagy by functioning as a ubiquitin-ATG8 family adapter and thus mediating autophagic clearance of ubiquitin conjugates (By similarity). The TOLLIP-dependent selective autophagy pathway plays an important role in clearance of cytotoxic polyQ proteins aggregates (By similarity). In a complex with TOM1, recruits ubiquitin-conjugated proteins onto early endosomes (By similarity). Binds to phosphatidylinositol 3-phosphate (PtdIns(3)P) (By similarity).</text>
</comment>
<comment type="subunit">
    <text evidence="2">Oligomerizes. Interacts (via C-terminus) with TLR2 and the TLR4-MD2 complex. Exists as complex with IRAK1 in unstimulated cells. Upon IL-1 signaling, Tollip binds to the activated IL-1 receptor complex containing IL-1RI, IL-1RacP and the adapter protein MyD88, where it interacts with the TIR domain of IL-1RacP. MyD88 then triggers IRAK1 autophosphorylation, which in turn leads to the dissociation of IRAK1 from Tollip and IL-1RAcP. Found in a complex with TOM1; interacts (via N-terminus) with TOM1 (via GAT domain); the interactions leads to TOM1-recruitment to endosomes and inhibition of TOLLIP binding to PtdIns(3)P (By similarity). Interacts with TOM1L2 (By similarity). Interacts with ATG8 family proteins (via AIM motifs), and ubiquitin (via CUE domain) (By similarity). Interacts with LRBA (By similarity). Interacts with ZNF268; this interaction leads to degradation by Tollip-mediated selective autophagy system (By similarity).</text>
</comment>
<comment type="subcellular location">
    <subcellularLocation>
        <location evidence="2">Cytoplasm</location>
    </subcellularLocation>
    <subcellularLocation>
        <location evidence="2">Endosome</location>
    </subcellularLocation>
    <subcellularLocation>
        <location evidence="2">Early endosome</location>
    </subcellularLocation>
    <text evidence="2">Localized to endo/exosomal vesicles.</text>
</comment>
<comment type="domain">
    <text evidence="2">Both ATG8-interaction motifs (AIM1 and AIM2) are required for the association with ATG8 family proteins.</text>
</comment>
<comment type="domain">
    <text evidence="2">The N-terminal TOM1-binding domain (residues 1-53) is a disordered domain that partially folds when bound to the GAT domain of TOM1.</text>
</comment>
<comment type="similarity">
    <text evidence="5">Belongs to the tollip family.</text>
</comment>
<keyword id="KW-0007">Acetylation</keyword>
<keyword id="KW-0072">Autophagy</keyword>
<keyword id="KW-0963">Cytoplasm</keyword>
<keyword id="KW-0967">Endosome</keyword>
<keyword id="KW-0391">Immunity</keyword>
<keyword id="KW-0395">Inflammatory response</keyword>
<keyword id="KW-0399">Innate immunity</keyword>
<keyword id="KW-0597">Phosphoprotein</keyword>
<keyword id="KW-1185">Reference proteome</keyword>
<keyword id="KW-0677">Repeat</keyword>
<evidence type="ECO:0000250" key="1">
    <source>
        <dbReference type="UniProtKB" id="A2RUW1"/>
    </source>
</evidence>
<evidence type="ECO:0000250" key="2">
    <source>
        <dbReference type="UniProtKB" id="Q9H0E2"/>
    </source>
</evidence>
<evidence type="ECO:0000255" key="3">
    <source>
        <dbReference type="PROSITE-ProRule" id="PRU00041"/>
    </source>
</evidence>
<evidence type="ECO:0000255" key="4">
    <source>
        <dbReference type="PROSITE-ProRule" id="PRU00468"/>
    </source>
</evidence>
<evidence type="ECO:0000305" key="5"/>
<feature type="initiator methionine" description="Removed" evidence="2">
    <location>
        <position position="1"/>
    </location>
</feature>
<feature type="chain" id="PRO_0000384931" description="Toll-interacting protein">
    <location>
        <begin position="2"/>
        <end position="273"/>
    </location>
</feature>
<feature type="domain" description="C2" evidence="3">
    <location>
        <begin position="35"/>
        <end position="152"/>
    </location>
</feature>
<feature type="domain" description="CUE" evidence="4">
    <location>
        <begin position="228"/>
        <end position="271"/>
    </location>
</feature>
<feature type="short sequence motif" description="AIM1">
    <location>
        <begin position="133"/>
        <end position="136"/>
    </location>
</feature>
<feature type="short sequence motif" description="AIM2">
    <location>
        <begin position="151"/>
        <end position="154"/>
    </location>
</feature>
<feature type="modified residue" description="N-acetylalanine" evidence="2">
    <location>
        <position position="2"/>
    </location>
</feature>
<feature type="modified residue" description="Phosphoserine" evidence="1">
    <location>
        <position position="273"/>
    </location>
</feature>
<feature type="sequence conflict" description="In Ref. 2; ABD72515 and 3; AAX46632." evidence="5" ref="2 3">
    <original>S</original>
    <variation>I</variation>
    <location>
        <position position="56"/>
    </location>
</feature>
<gene>
    <name type="primary">TOLLIP</name>
</gene>
<accession>Q2LGB5</accession>
<accession>Q58D12</accession>
<name>TOLIP_BOVIN</name>
<proteinExistence type="evidence at transcript level"/>
<reference key="1">
    <citation type="journal article" date="2006" name="Vet. Immunol. Immunopathol.">
        <title>Cloning and radiation hybrid mapping of bovine toll-like receptor-4 (TLR-4) signaling molecules.</title>
        <authorList>
            <person name="Connor E.E."/>
            <person name="Cates E.A."/>
            <person name="Williams J.L."/>
            <person name="Bannerman D.D."/>
        </authorList>
    </citation>
    <scope>NUCLEOTIDE SEQUENCE [MRNA]</scope>
    <source>
        <tissue>Mammary gland</tissue>
    </source>
</reference>
<reference key="2">
    <citation type="submission" date="2006-02" db="EMBL/GenBank/DDBJ databases">
        <title>Identification of signalling molecules involved in bovine TLR signalling.</title>
        <authorList>
            <person name="Werling D."/>
            <person name="Willcocks S."/>
        </authorList>
    </citation>
    <scope>NUCLEOTIDE SEQUENCE [MRNA]</scope>
</reference>
<reference key="3">
    <citation type="journal article" date="2005" name="BMC Genomics">
        <title>Characterization of 954 bovine full-CDS cDNA sequences.</title>
        <authorList>
            <person name="Harhay G.P."/>
            <person name="Sonstegard T.S."/>
            <person name="Keele J.W."/>
            <person name="Heaton M.P."/>
            <person name="Clawson M.L."/>
            <person name="Snelling W.M."/>
            <person name="Wiedmann R.T."/>
            <person name="Van Tassell C.P."/>
            <person name="Smith T.P.L."/>
        </authorList>
    </citation>
    <scope>NUCLEOTIDE SEQUENCE [LARGE SCALE MRNA]</scope>
</reference>
<reference key="4">
    <citation type="submission" date="2006-09" db="EMBL/GenBank/DDBJ databases">
        <authorList>
            <consortium name="NIH - Mammalian Gene Collection (MGC) project"/>
        </authorList>
    </citation>
    <scope>NUCLEOTIDE SEQUENCE [LARGE SCALE MRNA]</scope>
    <source>
        <strain>Hereford</strain>
        <tissue>Hippocampus</tissue>
    </source>
</reference>
<dbReference type="EMBL" id="DQ319073">
    <property type="protein sequence ID" value="ABC47876.1"/>
    <property type="molecule type" value="mRNA"/>
</dbReference>
<dbReference type="EMBL" id="DQ407275">
    <property type="protein sequence ID" value="ABD72515.1"/>
    <property type="molecule type" value="mRNA"/>
</dbReference>
<dbReference type="EMBL" id="BT021785">
    <property type="protein sequence ID" value="AAX46632.1"/>
    <property type="molecule type" value="mRNA"/>
</dbReference>
<dbReference type="EMBL" id="BC123457">
    <property type="protein sequence ID" value="AAI23458.1"/>
    <property type="molecule type" value="mRNA"/>
</dbReference>
<dbReference type="RefSeq" id="NP_001035050.1">
    <property type="nucleotide sequence ID" value="NM_001039961.1"/>
</dbReference>
<dbReference type="SMR" id="Q2LGB5"/>
<dbReference type="FunCoup" id="Q2LGB5">
    <property type="interactions" value="2130"/>
</dbReference>
<dbReference type="STRING" id="9913.ENSBTAP00000010835"/>
<dbReference type="PaxDb" id="9913-ENSBTAP00000010835"/>
<dbReference type="PeptideAtlas" id="Q2LGB5"/>
<dbReference type="GeneID" id="539480"/>
<dbReference type="KEGG" id="bta:539480"/>
<dbReference type="CTD" id="54472"/>
<dbReference type="VEuPathDB" id="HostDB:ENSBTAG00000008237"/>
<dbReference type="eggNOG" id="ENOG502QWQA">
    <property type="taxonomic scope" value="Eukaryota"/>
</dbReference>
<dbReference type="HOGENOM" id="CLU_067725_0_0_1"/>
<dbReference type="InParanoid" id="Q2LGB5"/>
<dbReference type="OMA" id="IYIQIFD"/>
<dbReference type="OrthoDB" id="9942608at2759"/>
<dbReference type="TreeFam" id="TF324180"/>
<dbReference type="Reactome" id="R-BTA-6798695">
    <property type="pathway name" value="Neutrophil degranulation"/>
</dbReference>
<dbReference type="Reactome" id="R-BTA-9020702">
    <property type="pathway name" value="Interleukin-1 signaling"/>
</dbReference>
<dbReference type="Proteomes" id="UP000009136">
    <property type="component" value="Chromosome 29"/>
</dbReference>
<dbReference type="Bgee" id="ENSBTAG00000008237">
    <property type="expression patterns" value="Expressed in temporal cortex and 105 other cell types or tissues"/>
</dbReference>
<dbReference type="GO" id="GO:0005737">
    <property type="term" value="C:cytoplasm"/>
    <property type="evidence" value="ECO:0000318"/>
    <property type="project" value="GO_Central"/>
</dbReference>
<dbReference type="GO" id="GO:0005769">
    <property type="term" value="C:early endosome"/>
    <property type="evidence" value="ECO:0007669"/>
    <property type="project" value="UniProtKB-SubCell"/>
</dbReference>
<dbReference type="GO" id="GO:0043130">
    <property type="term" value="F:ubiquitin binding"/>
    <property type="evidence" value="ECO:0000318"/>
    <property type="project" value="GO_Central"/>
</dbReference>
<dbReference type="GO" id="GO:0031624">
    <property type="term" value="F:ubiquitin conjugating enzyme binding"/>
    <property type="evidence" value="ECO:0000318"/>
    <property type="project" value="GO_Central"/>
</dbReference>
<dbReference type="GO" id="GO:0006914">
    <property type="term" value="P:autophagy"/>
    <property type="evidence" value="ECO:0007669"/>
    <property type="project" value="UniProtKB-KW"/>
</dbReference>
<dbReference type="GO" id="GO:0006954">
    <property type="term" value="P:inflammatory response"/>
    <property type="evidence" value="ECO:0007669"/>
    <property type="project" value="UniProtKB-KW"/>
</dbReference>
<dbReference type="GO" id="GO:0045087">
    <property type="term" value="P:innate immune response"/>
    <property type="evidence" value="ECO:0007669"/>
    <property type="project" value="UniProtKB-KW"/>
</dbReference>
<dbReference type="GO" id="GO:0016310">
    <property type="term" value="P:phosphorylation"/>
    <property type="evidence" value="ECO:0000250"/>
    <property type="project" value="UniProtKB"/>
</dbReference>
<dbReference type="GO" id="GO:0006511">
    <property type="term" value="P:ubiquitin-dependent protein catabolic process"/>
    <property type="evidence" value="ECO:0000318"/>
    <property type="project" value="GO_Central"/>
</dbReference>
<dbReference type="CDD" id="cd04016">
    <property type="entry name" value="C2_Tollip"/>
    <property type="match status" value="1"/>
</dbReference>
<dbReference type="CDD" id="cd14363">
    <property type="entry name" value="CUE_TOLIP"/>
    <property type="match status" value="1"/>
</dbReference>
<dbReference type="FunFam" id="1.10.8.10:FF:000036">
    <property type="entry name" value="Toll-interacting protein-like Protein"/>
    <property type="match status" value="1"/>
</dbReference>
<dbReference type="FunFam" id="2.60.40.150:FF:000055">
    <property type="entry name" value="Toll-interacting protein-like Protein"/>
    <property type="match status" value="1"/>
</dbReference>
<dbReference type="Gene3D" id="2.60.40.150">
    <property type="entry name" value="C2 domain"/>
    <property type="match status" value="1"/>
</dbReference>
<dbReference type="Gene3D" id="1.10.8.10">
    <property type="entry name" value="DNA helicase RuvA subunit, C-terminal domain"/>
    <property type="match status" value="1"/>
</dbReference>
<dbReference type="InterPro" id="IPR000008">
    <property type="entry name" value="C2_dom"/>
</dbReference>
<dbReference type="InterPro" id="IPR035892">
    <property type="entry name" value="C2_domain_sf"/>
</dbReference>
<dbReference type="InterPro" id="IPR003892">
    <property type="entry name" value="CUE"/>
</dbReference>
<dbReference type="InterPro" id="IPR041799">
    <property type="entry name" value="TOLIP_CUE"/>
</dbReference>
<dbReference type="InterPro" id="IPR037301">
    <property type="entry name" value="Tollip_C2"/>
</dbReference>
<dbReference type="InterPro" id="IPR009060">
    <property type="entry name" value="UBA-like_sf"/>
</dbReference>
<dbReference type="PANTHER" id="PTHR16461">
    <property type="entry name" value="TOLL-INTERACTING PROTEIN"/>
    <property type="match status" value="1"/>
</dbReference>
<dbReference type="PANTHER" id="PTHR16461:SF5">
    <property type="entry name" value="TOLL-INTERACTING PROTEIN"/>
    <property type="match status" value="1"/>
</dbReference>
<dbReference type="Pfam" id="PF00168">
    <property type="entry name" value="C2"/>
    <property type="match status" value="1"/>
</dbReference>
<dbReference type="Pfam" id="PF02845">
    <property type="entry name" value="CUE"/>
    <property type="match status" value="1"/>
</dbReference>
<dbReference type="SMART" id="SM00239">
    <property type="entry name" value="C2"/>
    <property type="match status" value="1"/>
</dbReference>
<dbReference type="SMART" id="SM00546">
    <property type="entry name" value="CUE"/>
    <property type="match status" value="1"/>
</dbReference>
<dbReference type="SUPFAM" id="SSF49562">
    <property type="entry name" value="C2 domain (Calcium/lipid-binding domain, CaLB)"/>
    <property type="match status" value="1"/>
</dbReference>
<dbReference type="SUPFAM" id="SSF46934">
    <property type="entry name" value="UBA-like"/>
    <property type="match status" value="1"/>
</dbReference>
<dbReference type="PROSITE" id="PS50004">
    <property type="entry name" value="C2"/>
    <property type="match status" value="1"/>
</dbReference>
<dbReference type="PROSITE" id="PS51140">
    <property type="entry name" value="CUE"/>
    <property type="match status" value="1"/>
</dbReference>
<protein>
    <recommendedName>
        <fullName>Toll-interacting protein</fullName>
    </recommendedName>
</protein>
<sequence length="273" mass="30082">MATTVSTQRGPVYIGELPQDFLRITPTQQQQQIQLDAQAAQQLQYGGALGTVGRLSVTVVQAKLAKNYGMTRMDPYCRLRLGYAVYETPTAHNGAKNPRWNKVIQCTVPPGVDSFYLEIFDERAFSMDDRIAWTHVTIPEALKQGKVVDEWYSLSGRQGDDKEGMINLVLSYTSLPAAMMMPPQPVVLMPTVYQQGVGYVPITGMPTVCSPGVVPVALPPAVSAQPRCSEEDLKAIQDMFPNMDREVIRSVLEAQRGSRDAAINSLLQMGEES</sequence>